<keyword id="KW-0067">ATP-binding</keyword>
<keyword id="KW-0963">Cytoplasm</keyword>
<keyword id="KW-0227">DNA damage</keyword>
<keyword id="KW-0228">DNA excision</keyword>
<keyword id="KW-0234">DNA repair</keyword>
<keyword id="KW-0238">DNA-binding</keyword>
<keyword id="KW-0267">Excision nuclease</keyword>
<keyword id="KW-0479">Metal-binding</keyword>
<keyword id="KW-0547">Nucleotide-binding</keyword>
<keyword id="KW-1185">Reference proteome</keyword>
<keyword id="KW-0677">Repeat</keyword>
<keyword id="KW-0742">SOS response</keyword>
<keyword id="KW-0862">Zinc</keyword>
<keyword id="KW-0863">Zinc-finger</keyword>
<evidence type="ECO:0000255" key="1">
    <source>
        <dbReference type="HAMAP-Rule" id="MF_00205"/>
    </source>
</evidence>
<dbReference type="EMBL" id="BA000026">
    <property type="protein sequence ID" value="BAC44701.1"/>
    <property type="molecule type" value="Genomic_DNA"/>
</dbReference>
<dbReference type="RefSeq" id="WP_011077730.1">
    <property type="nucleotide sequence ID" value="NC_004432.1"/>
</dbReference>
<dbReference type="SMR" id="Q8EUL1"/>
<dbReference type="FunCoup" id="Q8EUL1">
    <property type="interactions" value="137"/>
</dbReference>
<dbReference type="STRING" id="272633.gene:10732032"/>
<dbReference type="KEGG" id="mpe:MYPE9100"/>
<dbReference type="eggNOG" id="COG0178">
    <property type="taxonomic scope" value="Bacteria"/>
</dbReference>
<dbReference type="HOGENOM" id="CLU_001370_0_2_14"/>
<dbReference type="InParanoid" id="Q8EUL1"/>
<dbReference type="Proteomes" id="UP000002522">
    <property type="component" value="Chromosome"/>
</dbReference>
<dbReference type="GO" id="GO:0005737">
    <property type="term" value="C:cytoplasm"/>
    <property type="evidence" value="ECO:0007669"/>
    <property type="project" value="UniProtKB-SubCell"/>
</dbReference>
<dbReference type="GO" id="GO:0009380">
    <property type="term" value="C:excinuclease repair complex"/>
    <property type="evidence" value="ECO:0007669"/>
    <property type="project" value="InterPro"/>
</dbReference>
<dbReference type="GO" id="GO:0005524">
    <property type="term" value="F:ATP binding"/>
    <property type="evidence" value="ECO:0007669"/>
    <property type="project" value="UniProtKB-UniRule"/>
</dbReference>
<dbReference type="GO" id="GO:0016887">
    <property type="term" value="F:ATP hydrolysis activity"/>
    <property type="evidence" value="ECO:0007669"/>
    <property type="project" value="InterPro"/>
</dbReference>
<dbReference type="GO" id="GO:0003677">
    <property type="term" value="F:DNA binding"/>
    <property type="evidence" value="ECO:0007669"/>
    <property type="project" value="UniProtKB-UniRule"/>
</dbReference>
<dbReference type="GO" id="GO:0009381">
    <property type="term" value="F:excinuclease ABC activity"/>
    <property type="evidence" value="ECO:0007669"/>
    <property type="project" value="UniProtKB-UniRule"/>
</dbReference>
<dbReference type="GO" id="GO:0008270">
    <property type="term" value="F:zinc ion binding"/>
    <property type="evidence" value="ECO:0007669"/>
    <property type="project" value="UniProtKB-UniRule"/>
</dbReference>
<dbReference type="GO" id="GO:0006289">
    <property type="term" value="P:nucleotide-excision repair"/>
    <property type="evidence" value="ECO:0007669"/>
    <property type="project" value="UniProtKB-UniRule"/>
</dbReference>
<dbReference type="GO" id="GO:0009432">
    <property type="term" value="P:SOS response"/>
    <property type="evidence" value="ECO:0007669"/>
    <property type="project" value="UniProtKB-UniRule"/>
</dbReference>
<dbReference type="CDD" id="cd03270">
    <property type="entry name" value="ABC_UvrA_I"/>
    <property type="match status" value="1"/>
</dbReference>
<dbReference type="CDD" id="cd03271">
    <property type="entry name" value="ABC_UvrA_II"/>
    <property type="match status" value="1"/>
</dbReference>
<dbReference type="Gene3D" id="1.10.8.280">
    <property type="entry name" value="ABC transporter ATPase domain-like"/>
    <property type="match status" value="1"/>
</dbReference>
<dbReference type="Gene3D" id="1.20.1580.10">
    <property type="entry name" value="ABC transporter ATPase like domain"/>
    <property type="match status" value="2"/>
</dbReference>
<dbReference type="Gene3D" id="3.30.1490.20">
    <property type="entry name" value="ATP-grasp fold, A domain"/>
    <property type="match status" value="1"/>
</dbReference>
<dbReference type="Gene3D" id="3.40.50.300">
    <property type="entry name" value="P-loop containing nucleotide triphosphate hydrolases"/>
    <property type="match status" value="2"/>
</dbReference>
<dbReference type="HAMAP" id="MF_00205">
    <property type="entry name" value="UvrA"/>
    <property type="match status" value="1"/>
</dbReference>
<dbReference type="InterPro" id="IPR003439">
    <property type="entry name" value="ABC_transporter-like_ATP-bd"/>
</dbReference>
<dbReference type="InterPro" id="IPR017871">
    <property type="entry name" value="ABC_transporter-like_CS"/>
</dbReference>
<dbReference type="InterPro" id="IPR013815">
    <property type="entry name" value="ATP_grasp_subdomain_1"/>
</dbReference>
<dbReference type="InterPro" id="IPR027417">
    <property type="entry name" value="P-loop_NTPase"/>
</dbReference>
<dbReference type="InterPro" id="IPR004602">
    <property type="entry name" value="UvrA"/>
</dbReference>
<dbReference type="InterPro" id="IPR041552">
    <property type="entry name" value="UvrA_DNA-bd"/>
</dbReference>
<dbReference type="InterPro" id="IPR041102">
    <property type="entry name" value="UvrA_inter"/>
</dbReference>
<dbReference type="NCBIfam" id="NF001503">
    <property type="entry name" value="PRK00349.1"/>
    <property type="match status" value="1"/>
</dbReference>
<dbReference type="NCBIfam" id="TIGR00630">
    <property type="entry name" value="uvra"/>
    <property type="match status" value="1"/>
</dbReference>
<dbReference type="PANTHER" id="PTHR43152">
    <property type="entry name" value="UVRABC SYSTEM PROTEIN A"/>
    <property type="match status" value="1"/>
</dbReference>
<dbReference type="PANTHER" id="PTHR43152:SF3">
    <property type="entry name" value="UVRABC SYSTEM PROTEIN A"/>
    <property type="match status" value="1"/>
</dbReference>
<dbReference type="Pfam" id="PF17755">
    <property type="entry name" value="UvrA_DNA-bind"/>
    <property type="match status" value="1"/>
</dbReference>
<dbReference type="Pfam" id="PF17760">
    <property type="entry name" value="UvrA_inter"/>
    <property type="match status" value="1"/>
</dbReference>
<dbReference type="SUPFAM" id="SSF52540">
    <property type="entry name" value="P-loop containing nucleoside triphosphate hydrolases"/>
    <property type="match status" value="2"/>
</dbReference>
<dbReference type="PROSITE" id="PS00211">
    <property type="entry name" value="ABC_TRANSPORTER_1"/>
    <property type="match status" value="2"/>
</dbReference>
<dbReference type="PROSITE" id="PS50893">
    <property type="entry name" value="ABC_TRANSPORTER_2"/>
    <property type="match status" value="2"/>
</dbReference>
<sequence>MNNKVNTRDFIVVKGARENNLKNVDIDIPKNKFVVMTGLSGSGKSSLAFDTIYAEGQRRYLESLSSYARQFLGGNEKPDVDSIEGLSPAISIDQKTTSHNPRSTVGTVTEIYDYLRLLFSRIGKPYCPNGHGLISTLSIKQMIDTVYENKEESKIQILSPIISQEKGTFKNKIEELKRQGYLRLRIDGNIYSLDDEIELEKTKKHNIDILIDRIILNNDTVTRSRIYDAIEKSVKEANGKVIVLVDDKELFFSQNHACNECGFSIPELEPRFFSFNSPVGACKSCNGIGFNFLPDTAKIVPDPSLSIKEGAIAYFRSVMMTPTMDLKREMSVWKEHDINLDVPFKELSKKEKNIIFYGDEDIGELKIDVNEQSIYSSSSFLYNNGLVNLIMRRFSETQSERAREYYEKFMSNLSCPSCNGQKLSIEALSVKINNKNIIDLTEKNINDLTNFFIELELNETDRNIAHLALKEIVDRLSFLENVGLNYLTLSRSASTLSGGESQRIRLATQIGSSLTGVLYVLDEPSIGLHQKDNEKLIETLKKMRDLGNTLIVVEHDEDTIRASDYLIDIGPKAGDFGGEVVAAGTVSEVSENKKSITAQYLSGKLKIEVPSKRRHGNGKTIELVGASGNNLKNVTVSFPLNKLIAVTGVSGSGKSTLINETLIKGIEKKLTNPFIVPAPFKDIKGLKNVDKIIKVSQDPIGRTPRSNPATYVSVFDDIRDLFANTKEAKARGFQKGRFSFNVSGGRCENCSGDGLIKIEMHFLPDVFVKCESCNGKKYNQETLQVLYKGKSIYDVLEMSVVEARDFFYEIPEIKRKLDLMVEVGIDYLKLGTSSTHLSGGEAQRIKLAKYLQKRATGKTIYVLDEPTTGLHIHDIAKLITVLNRIVDNGDTVIVVEHNLDLIKCADYVIDLGPDGGINGGQLVAYGTPEEIIEKKAVSYTGLFLEKNMYKDK</sequence>
<name>UVRA_MALP2</name>
<protein>
    <recommendedName>
        <fullName evidence="1">UvrABC system protein A</fullName>
        <shortName evidence="1">UvrA protein</shortName>
    </recommendedName>
    <alternativeName>
        <fullName evidence="1">Excinuclease ABC subunit A</fullName>
    </alternativeName>
</protein>
<organism>
    <name type="scientific">Malacoplasma penetrans (strain HF-2)</name>
    <name type="common">Mycoplasma penetrans</name>
    <dbReference type="NCBI Taxonomy" id="272633"/>
    <lineage>
        <taxon>Bacteria</taxon>
        <taxon>Bacillati</taxon>
        <taxon>Mycoplasmatota</taxon>
        <taxon>Mycoplasmoidales</taxon>
        <taxon>Mycoplasmoidaceae</taxon>
        <taxon>Malacoplasma</taxon>
    </lineage>
</organism>
<reference key="1">
    <citation type="journal article" date="2002" name="Nucleic Acids Res.">
        <title>The complete genomic sequence of Mycoplasma penetrans, an intracellular bacterial pathogen in humans.</title>
        <authorList>
            <person name="Sasaki Y."/>
            <person name="Ishikawa J."/>
            <person name="Yamashita A."/>
            <person name="Oshima K."/>
            <person name="Kenri T."/>
            <person name="Furuya K."/>
            <person name="Yoshino C."/>
            <person name="Horino A."/>
            <person name="Shiba T."/>
            <person name="Sasaki T."/>
            <person name="Hattori M."/>
        </authorList>
    </citation>
    <scope>NUCLEOTIDE SEQUENCE [LARGE SCALE GENOMIC DNA]</scope>
    <source>
        <strain>HF-2</strain>
    </source>
</reference>
<proteinExistence type="inferred from homology"/>
<feature type="chain" id="PRO_0000093065" description="UvrABC system protein A">
    <location>
        <begin position="1"/>
        <end position="952"/>
    </location>
</feature>
<feature type="domain" description="ABC transporter 1" evidence="1">
    <location>
        <begin position="315"/>
        <end position="596"/>
    </location>
</feature>
<feature type="domain" description="ABC transporter 2" evidence="1">
    <location>
        <begin position="616"/>
        <end position="945"/>
    </location>
</feature>
<feature type="zinc finger region" description="C4-type" evidence="1">
    <location>
        <begin position="258"/>
        <end position="285"/>
    </location>
</feature>
<feature type="zinc finger region" description="C4-type" evidence="1">
    <location>
        <begin position="747"/>
        <end position="773"/>
    </location>
</feature>
<feature type="binding site" evidence="1">
    <location>
        <begin position="38"/>
        <end position="45"/>
    </location>
    <ligand>
        <name>ATP</name>
        <dbReference type="ChEBI" id="CHEBI:30616"/>
    </ligand>
</feature>
<feature type="binding site" evidence="1">
    <location>
        <begin position="648"/>
        <end position="655"/>
    </location>
    <ligand>
        <name>ATP</name>
        <dbReference type="ChEBI" id="CHEBI:30616"/>
    </ligand>
</feature>
<comment type="function">
    <text evidence="1">The UvrABC repair system catalyzes the recognition and processing of DNA lesions. UvrA is an ATPase and a DNA-binding protein. A damage recognition complex composed of 2 UvrA and 2 UvrB subunits scans DNA for abnormalities. When the presence of a lesion has been verified by UvrB, the UvrA molecules dissociate.</text>
</comment>
<comment type="subunit">
    <text evidence="1">Forms a heterotetramer with UvrB during the search for lesions.</text>
</comment>
<comment type="subcellular location">
    <subcellularLocation>
        <location evidence="1">Cytoplasm</location>
    </subcellularLocation>
</comment>
<comment type="similarity">
    <text evidence="1">Belongs to the ABC transporter superfamily. UvrA family.</text>
</comment>
<accession>Q8EUL1</accession>
<gene>
    <name evidence="1" type="primary">uvrA</name>
    <name type="ordered locus">MYPE9100</name>
</gene>